<gene>
    <name type="primary">lacB</name>
    <name type="ORF">AN0980</name>
</gene>
<sequence>MATAFWLLLFLLGSLHVLTAAQNSSQSEWPIHDNGLSKVVQWDHYSFYINGQRIFLFSGEFHYWRIPVPALWRDILEKIKAIGFTGFAFYSSWAYHAPNNQTVDFSTGARDITPIYDLAKELGMYIIVRPGPYVNAEASAGGFPLWLTTGAYGSTRNDDPRYTAAWEPYFAEVSEITSKYQVTDGHYTLCYQIENEYGQQWIGDPRDRNPNQTAIAYMELLQASARENGITVPLTGNDPNMNTKSWGSDWSDAGGNLDTVGLDSYPSCWSCDVSVCTGTNGEYVPYKVLDYYDYFQEVQPTMPFFMPEFQGGSYNPWDGPEGGCTEDTGADFANLFYRWNIGQRVSAMSLYMMFGGTNWGGIAAPVTASSYDYSAPISEDRSIGSKYYETKLLALFTRCAKDLTMTDRLGNGTQYTDNEAVIASELRNPDTNAAFYVTTHLDTTVGTDESFKLHVNTSKGALTIPRHGGTIRLNGHHSKIIVTDFNFGSETLLYSTAEVLTYAVFDRKPTLVLWVPTGESGEFAIKGAKSGSVAKCSGCSNIKFHRDSGSLTVAFTQGEGISVLQLDNGVRVVLLDRQKAYTFWAPALTDNPLVPEGESVLVSGPYLVRTARLARSTLTLRGDSKGETLEIFAPRKIKKVTWNGKAVEATRTSYGSLKAILAKPPSVELPTLNGWKYSDSLPERFPTYDDSGAAWVEIDANHMTTPNPNKPATLPVLYADEYGFHNGVRLWRGYFNSSASGVYLNIQGGAAFGWSAWLNGHFLGSHLGSASIQQANGTLDFPANTLNTEGTPNVLLVVHDDTGHDQTTGVLNPRGILEARLLSEASDNNDDDSPGFTHWRVAGTAGGESDLDPVRGVYNEDGLYAERVGWHLPGFDDSKWATVNGTSLSFTGATVRFFRTVIPPLSIPENTDVSISFVFSTPNVNNTSAGNTSAFRAQLFVNGYQYGRYNPYVGNQVVYPVPPGILDYNGENTIGVAVWAQTEAGARLNLDWRVNYVLGSSLDAGRLDLSFVAIAYVYIFECLQL</sequence>
<keyword id="KW-0119">Carbohydrate metabolism</keyword>
<keyword id="KW-1015">Disulfide bond</keyword>
<keyword id="KW-0325">Glycoprotein</keyword>
<keyword id="KW-0326">Glycosidase</keyword>
<keyword id="KW-0378">Hydrolase</keyword>
<keyword id="KW-0624">Polysaccharide degradation</keyword>
<keyword id="KW-1185">Reference proteome</keyword>
<keyword id="KW-0964">Secreted</keyword>
<keyword id="KW-0732">Signal</keyword>
<proteinExistence type="inferred from homology"/>
<accession>Q5BEQ0</accession>
<accession>C8VU89</accession>
<organism>
    <name type="scientific">Emericella nidulans (strain FGSC A4 / ATCC 38163 / CBS 112.46 / NRRL 194 / M139)</name>
    <name type="common">Aspergillus nidulans</name>
    <dbReference type="NCBI Taxonomy" id="227321"/>
    <lineage>
        <taxon>Eukaryota</taxon>
        <taxon>Fungi</taxon>
        <taxon>Dikarya</taxon>
        <taxon>Ascomycota</taxon>
        <taxon>Pezizomycotina</taxon>
        <taxon>Eurotiomycetes</taxon>
        <taxon>Eurotiomycetidae</taxon>
        <taxon>Eurotiales</taxon>
        <taxon>Aspergillaceae</taxon>
        <taxon>Aspergillus</taxon>
        <taxon>Aspergillus subgen. Nidulantes</taxon>
    </lineage>
</organism>
<evidence type="ECO:0000250" key="1"/>
<evidence type="ECO:0000255" key="2"/>
<evidence type="ECO:0000305" key="3"/>
<name>BGALB_EMENI</name>
<comment type="function">
    <text evidence="1">Cleaves beta-linked terminal galactosyl residues from gangliosides, glycoproteins, and glycosaminoglycans.</text>
</comment>
<comment type="catalytic activity">
    <reaction>
        <text>Hydrolysis of terminal non-reducing beta-D-galactose residues in beta-D-galactosides.</text>
        <dbReference type="EC" id="3.2.1.23"/>
    </reaction>
</comment>
<comment type="subcellular location">
    <subcellularLocation>
        <location evidence="1">Secreted</location>
    </subcellularLocation>
</comment>
<comment type="similarity">
    <text evidence="3">Belongs to the glycosyl hydrolase 35 family.</text>
</comment>
<comment type="sequence caution" evidence="3">
    <conflict type="erroneous gene model prediction">
        <sequence resource="EMBL-CDS" id="CBF88404"/>
    </conflict>
</comment>
<comment type="sequence caution" evidence="3">
    <conflict type="erroneous gene model prediction">
        <sequence resource="EMBL-CDS" id="EAA66009"/>
    </conflict>
</comment>
<protein>
    <recommendedName>
        <fullName>Probable beta-galactosidase B</fullName>
        <ecNumber>3.2.1.23</ecNumber>
    </recommendedName>
    <alternativeName>
        <fullName>Lactase B</fullName>
    </alternativeName>
</protein>
<dbReference type="EC" id="3.2.1.23"/>
<dbReference type="EMBL" id="AACD01000014">
    <property type="protein sequence ID" value="EAA66009.1"/>
    <property type="status" value="ALT_SEQ"/>
    <property type="molecule type" value="Genomic_DNA"/>
</dbReference>
<dbReference type="EMBL" id="BN001308">
    <property type="protein sequence ID" value="CBF88404.1"/>
    <property type="status" value="ALT_SEQ"/>
    <property type="molecule type" value="Genomic_DNA"/>
</dbReference>
<dbReference type="RefSeq" id="XP_658584.1">
    <property type="nucleotide sequence ID" value="XM_653492.1"/>
</dbReference>
<dbReference type="SMR" id="Q5BEQ0"/>
<dbReference type="STRING" id="227321.Q5BEQ0"/>
<dbReference type="CAZy" id="GH35">
    <property type="family name" value="Glycoside Hydrolase Family 35"/>
</dbReference>
<dbReference type="GlyCosmos" id="Q5BEQ0">
    <property type="glycosylation" value="10 sites, No reported glycans"/>
</dbReference>
<dbReference type="KEGG" id="ani:ANIA_00980"/>
<dbReference type="eggNOG" id="KOG0496">
    <property type="taxonomic scope" value="Eukaryota"/>
</dbReference>
<dbReference type="HOGENOM" id="CLU_005732_2_0_1"/>
<dbReference type="InParanoid" id="Q5BEQ0"/>
<dbReference type="OrthoDB" id="1657402at2759"/>
<dbReference type="Proteomes" id="UP000000560">
    <property type="component" value="Chromosome VIII"/>
</dbReference>
<dbReference type="GO" id="GO:0005576">
    <property type="term" value="C:extracellular region"/>
    <property type="evidence" value="ECO:0007669"/>
    <property type="project" value="UniProtKB-SubCell"/>
</dbReference>
<dbReference type="GO" id="GO:0005773">
    <property type="term" value="C:vacuole"/>
    <property type="evidence" value="ECO:0000318"/>
    <property type="project" value="GO_Central"/>
</dbReference>
<dbReference type="GO" id="GO:0004565">
    <property type="term" value="F:beta-galactosidase activity"/>
    <property type="evidence" value="ECO:0000318"/>
    <property type="project" value="GO_Central"/>
</dbReference>
<dbReference type="GO" id="GO:0019388">
    <property type="term" value="P:galactose catabolic process"/>
    <property type="evidence" value="ECO:0000318"/>
    <property type="project" value="GO_Central"/>
</dbReference>
<dbReference type="GO" id="GO:0000272">
    <property type="term" value="P:polysaccharide catabolic process"/>
    <property type="evidence" value="ECO:0007669"/>
    <property type="project" value="UniProtKB-KW"/>
</dbReference>
<dbReference type="FunFam" id="2.102.20.10:FF:000001">
    <property type="entry name" value="Beta-galactosidase A"/>
    <property type="match status" value="1"/>
</dbReference>
<dbReference type="FunFam" id="3.20.20.80:FF:000040">
    <property type="entry name" value="Beta-galactosidase A"/>
    <property type="match status" value="1"/>
</dbReference>
<dbReference type="FunFam" id="2.60.120.260:FF:000138">
    <property type="entry name" value="Probable beta-galactosidase B"/>
    <property type="match status" value="1"/>
</dbReference>
<dbReference type="Gene3D" id="2.102.20.10">
    <property type="entry name" value="Beta-galactosidase, domain 2"/>
    <property type="match status" value="1"/>
</dbReference>
<dbReference type="Gene3D" id="2.60.390.10">
    <property type="entry name" value="Beta-galactosidase, domain 3"/>
    <property type="match status" value="1"/>
</dbReference>
<dbReference type="Gene3D" id="2.60.120.260">
    <property type="entry name" value="Galactose-binding domain-like"/>
    <property type="match status" value="2"/>
</dbReference>
<dbReference type="Gene3D" id="3.20.20.80">
    <property type="entry name" value="Glycosidases"/>
    <property type="match status" value="1"/>
</dbReference>
<dbReference type="InterPro" id="IPR018954">
    <property type="entry name" value="Betagal_dom2"/>
</dbReference>
<dbReference type="InterPro" id="IPR037110">
    <property type="entry name" value="Betagal_dom2_sf"/>
</dbReference>
<dbReference type="InterPro" id="IPR025972">
    <property type="entry name" value="BetaGal_dom3"/>
</dbReference>
<dbReference type="InterPro" id="IPR036833">
    <property type="entry name" value="BetaGal_dom3_sf"/>
</dbReference>
<dbReference type="InterPro" id="IPR025300">
    <property type="entry name" value="BetaGal_jelly_roll_dom"/>
</dbReference>
<dbReference type="InterPro" id="IPR008979">
    <property type="entry name" value="Galactose-bd-like_sf"/>
</dbReference>
<dbReference type="InterPro" id="IPR031330">
    <property type="entry name" value="Gly_Hdrlase_35_cat"/>
</dbReference>
<dbReference type="InterPro" id="IPR001944">
    <property type="entry name" value="Glycoside_Hdrlase_35"/>
</dbReference>
<dbReference type="InterPro" id="IPR017853">
    <property type="entry name" value="Glycoside_hydrolase_SF"/>
</dbReference>
<dbReference type="PANTHER" id="PTHR23421">
    <property type="entry name" value="BETA-GALACTOSIDASE RELATED"/>
    <property type="match status" value="1"/>
</dbReference>
<dbReference type="Pfam" id="PF13364">
    <property type="entry name" value="BetaGal_ABD2"/>
    <property type="match status" value="2"/>
</dbReference>
<dbReference type="Pfam" id="PF10435">
    <property type="entry name" value="BetaGal_dom2"/>
    <property type="match status" value="1"/>
</dbReference>
<dbReference type="Pfam" id="PF13363">
    <property type="entry name" value="BetaGal_dom3"/>
    <property type="match status" value="1"/>
</dbReference>
<dbReference type="Pfam" id="PF01301">
    <property type="entry name" value="Glyco_hydro_35"/>
    <property type="match status" value="1"/>
</dbReference>
<dbReference type="PRINTS" id="PR00742">
    <property type="entry name" value="GLHYDRLASE35"/>
</dbReference>
<dbReference type="SMART" id="SM01029">
    <property type="entry name" value="BetaGal_dom2"/>
    <property type="match status" value="1"/>
</dbReference>
<dbReference type="SUPFAM" id="SSF51445">
    <property type="entry name" value="(Trans)glycosidases"/>
    <property type="match status" value="1"/>
</dbReference>
<dbReference type="SUPFAM" id="SSF117100">
    <property type="entry name" value="Beta-galactosidase LacA, domain 3"/>
    <property type="match status" value="1"/>
</dbReference>
<dbReference type="SUPFAM" id="SSF49785">
    <property type="entry name" value="Galactose-binding domain-like"/>
    <property type="match status" value="2"/>
</dbReference>
<dbReference type="SUPFAM" id="SSF51011">
    <property type="entry name" value="Glycosyl hydrolase domain"/>
    <property type="match status" value="1"/>
</dbReference>
<reference key="1">
    <citation type="journal article" date="2005" name="Nature">
        <title>Sequencing of Aspergillus nidulans and comparative analysis with A. fumigatus and A. oryzae.</title>
        <authorList>
            <person name="Galagan J.E."/>
            <person name="Calvo S.E."/>
            <person name="Cuomo C."/>
            <person name="Ma L.-J."/>
            <person name="Wortman J.R."/>
            <person name="Batzoglou S."/>
            <person name="Lee S.-I."/>
            <person name="Bastuerkmen M."/>
            <person name="Spevak C.C."/>
            <person name="Clutterbuck J."/>
            <person name="Kapitonov V."/>
            <person name="Jurka J."/>
            <person name="Scazzocchio C."/>
            <person name="Farman M.L."/>
            <person name="Butler J."/>
            <person name="Purcell S."/>
            <person name="Harris S."/>
            <person name="Braus G.H."/>
            <person name="Draht O."/>
            <person name="Busch S."/>
            <person name="D'Enfert C."/>
            <person name="Bouchier C."/>
            <person name="Goldman G.H."/>
            <person name="Bell-Pedersen D."/>
            <person name="Griffiths-Jones S."/>
            <person name="Doonan J.H."/>
            <person name="Yu J."/>
            <person name="Vienken K."/>
            <person name="Pain A."/>
            <person name="Freitag M."/>
            <person name="Selker E.U."/>
            <person name="Archer D.B."/>
            <person name="Penalva M.A."/>
            <person name="Oakley B.R."/>
            <person name="Momany M."/>
            <person name="Tanaka T."/>
            <person name="Kumagai T."/>
            <person name="Asai K."/>
            <person name="Machida M."/>
            <person name="Nierman W.C."/>
            <person name="Denning D.W."/>
            <person name="Caddick M.X."/>
            <person name="Hynes M."/>
            <person name="Paoletti M."/>
            <person name="Fischer R."/>
            <person name="Miller B.L."/>
            <person name="Dyer P.S."/>
            <person name="Sachs M.S."/>
            <person name="Osmani S.A."/>
            <person name="Birren B.W."/>
        </authorList>
    </citation>
    <scope>NUCLEOTIDE SEQUENCE [LARGE SCALE GENOMIC DNA]</scope>
    <source>
        <strain>FGSC A4 / ATCC 38163 / CBS 112.46 / NRRL 194 / M139</strain>
    </source>
</reference>
<reference key="2">
    <citation type="journal article" date="2009" name="Fungal Genet. Biol.">
        <title>The 2008 update of the Aspergillus nidulans genome annotation: a community effort.</title>
        <authorList>
            <person name="Wortman J.R."/>
            <person name="Gilsenan J.M."/>
            <person name="Joardar V."/>
            <person name="Deegan J."/>
            <person name="Clutterbuck J."/>
            <person name="Andersen M.R."/>
            <person name="Archer D."/>
            <person name="Bencina M."/>
            <person name="Braus G."/>
            <person name="Coutinho P."/>
            <person name="von Dohren H."/>
            <person name="Doonan J."/>
            <person name="Driessen A.J."/>
            <person name="Durek P."/>
            <person name="Espeso E."/>
            <person name="Fekete E."/>
            <person name="Flipphi M."/>
            <person name="Estrada C.G."/>
            <person name="Geysens S."/>
            <person name="Goldman G."/>
            <person name="de Groot P.W."/>
            <person name="Hansen K."/>
            <person name="Harris S.D."/>
            <person name="Heinekamp T."/>
            <person name="Helmstaedt K."/>
            <person name="Henrissat B."/>
            <person name="Hofmann G."/>
            <person name="Homan T."/>
            <person name="Horio T."/>
            <person name="Horiuchi H."/>
            <person name="James S."/>
            <person name="Jones M."/>
            <person name="Karaffa L."/>
            <person name="Karanyi Z."/>
            <person name="Kato M."/>
            <person name="Keller N."/>
            <person name="Kelly D.E."/>
            <person name="Kiel J.A."/>
            <person name="Kim J.M."/>
            <person name="van der Klei I.J."/>
            <person name="Klis F.M."/>
            <person name="Kovalchuk A."/>
            <person name="Krasevec N."/>
            <person name="Kubicek C.P."/>
            <person name="Liu B."/>
            <person name="Maccabe A."/>
            <person name="Meyer V."/>
            <person name="Mirabito P."/>
            <person name="Miskei M."/>
            <person name="Mos M."/>
            <person name="Mullins J."/>
            <person name="Nelson D.R."/>
            <person name="Nielsen J."/>
            <person name="Oakley B.R."/>
            <person name="Osmani S.A."/>
            <person name="Pakula T."/>
            <person name="Paszewski A."/>
            <person name="Paulsen I."/>
            <person name="Pilsyk S."/>
            <person name="Pocsi I."/>
            <person name="Punt P.J."/>
            <person name="Ram A.F."/>
            <person name="Ren Q."/>
            <person name="Robellet X."/>
            <person name="Robson G."/>
            <person name="Seiboth B."/>
            <person name="van Solingen P."/>
            <person name="Specht T."/>
            <person name="Sun J."/>
            <person name="Taheri-Talesh N."/>
            <person name="Takeshita N."/>
            <person name="Ussery D."/>
            <person name="vanKuyk P.A."/>
            <person name="Visser H."/>
            <person name="van de Vondervoort P.J."/>
            <person name="de Vries R.P."/>
            <person name="Walton J."/>
            <person name="Xiang X."/>
            <person name="Xiong Y."/>
            <person name="Zeng A.P."/>
            <person name="Brandt B.W."/>
            <person name="Cornell M.J."/>
            <person name="van den Hondel C.A."/>
            <person name="Visser J."/>
            <person name="Oliver S.G."/>
            <person name="Turner G."/>
        </authorList>
    </citation>
    <scope>GENOME REANNOTATION</scope>
    <source>
        <strain>FGSC A4 / ATCC 38163 / CBS 112.46 / NRRL 194 / M139</strain>
    </source>
</reference>
<feature type="signal peptide" evidence="2">
    <location>
        <begin position="1"/>
        <end position="21"/>
    </location>
</feature>
<feature type="chain" id="PRO_0000395229" description="Probable beta-galactosidase B">
    <location>
        <begin position="22"/>
        <end position="1025"/>
    </location>
</feature>
<feature type="active site" description="Proton donor" evidence="2">
    <location>
        <position position="196"/>
    </location>
</feature>
<feature type="active site" description="Nucleophile" evidence="2">
    <location>
        <position position="308"/>
    </location>
</feature>
<feature type="binding site" evidence="1">
    <location>
        <position position="90"/>
    </location>
    <ligand>
        <name>substrate</name>
    </ligand>
</feature>
<feature type="binding site" evidence="1">
    <location>
        <position position="135"/>
    </location>
    <ligand>
        <name>substrate</name>
    </ligand>
</feature>
<feature type="binding site" evidence="1">
    <location>
        <position position="136"/>
    </location>
    <ligand>
        <name>substrate</name>
    </ligand>
</feature>
<feature type="binding site" evidence="1">
    <location>
        <position position="137"/>
    </location>
    <ligand>
        <name>substrate</name>
    </ligand>
</feature>
<feature type="binding site" evidence="1">
    <location>
        <position position="195"/>
    </location>
    <ligand>
        <name>substrate</name>
    </ligand>
</feature>
<feature type="binding site" evidence="1">
    <location>
        <position position="265"/>
    </location>
    <ligand>
        <name>substrate</name>
    </ligand>
</feature>
<feature type="binding site" evidence="1">
    <location>
        <position position="373"/>
    </location>
    <ligand>
        <name>substrate</name>
    </ligand>
</feature>
<feature type="glycosylation site" description="N-linked (GlcNAc...) asparagine" evidence="2">
    <location>
        <position position="23"/>
    </location>
</feature>
<feature type="glycosylation site" description="N-linked (GlcNAc...) asparagine" evidence="2">
    <location>
        <position position="100"/>
    </location>
</feature>
<feature type="glycosylation site" description="N-linked (GlcNAc...) asparagine" evidence="2">
    <location>
        <position position="211"/>
    </location>
</feature>
<feature type="glycosylation site" description="N-linked (GlcNAc...) asparagine" evidence="2">
    <location>
        <position position="411"/>
    </location>
</feature>
<feature type="glycosylation site" description="N-linked (GlcNAc...) asparagine" evidence="2">
    <location>
        <position position="456"/>
    </location>
</feature>
<feature type="glycosylation site" description="N-linked (GlcNAc...) asparagine" evidence="2">
    <location>
        <position position="736"/>
    </location>
</feature>
<feature type="glycosylation site" description="N-linked (GlcNAc...) asparagine" evidence="2">
    <location>
        <position position="776"/>
    </location>
</feature>
<feature type="glycosylation site" description="N-linked (GlcNAc...) asparagine" evidence="2">
    <location>
        <position position="884"/>
    </location>
</feature>
<feature type="glycosylation site" description="N-linked (GlcNAc...) asparagine" evidence="2">
    <location>
        <position position="925"/>
    </location>
</feature>
<feature type="glycosylation site" description="N-linked (GlcNAc...) asparagine" evidence="2">
    <location>
        <position position="926"/>
    </location>
</feature>
<feature type="disulfide bond" evidence="1">
    <location>
        <begin position="271"/>
        <end position="324"/>
    </location>
</feature>